<sequence length="451" mass="48979">MTETLHIVGGGMAGSEAAWQAAQMGVSVVIHEMRPKVGTFAHKTGHLAEMVCSNSFRSDDDEQNAVGLLHWEMRAAGGLIMEMADAHALPAGGALAVDREPFAESVTARLHEHPNIRVEGTEITSLPAEGKWIIATGPLTSGALAEAIAAETGQESLAFFDAIAPILYFDSIDMTKAWMQSRYDKGETEEERTAYLNCPMDRDQYEAFIDALLAAEKTEFKPGETAGYFDGCLPIEVMAERGRETLRHGPMKPVGLTNPHQPDVKAHAVVQLRRDNALGTLYNIVGFQTKMKYGAQKEVLRMIPGLEEARFARLGGIHRNTFINAPTLLDDQMRLHSRPNLRFAGQITGVEGYVESAAMGLLAGRMAAAEILGTPLASPPQETAMGALIHHITGGAEAKTFQPMNVNFGLFPPLDGVRGGRRGRKERYKGYTDRAKAAWQGWLGQTALAAE</sequence>
<evidence type="ECO:0000255" key="1">
    <source>
        <dbReference type="HAMAP-Rule" id="MF_01037"/>
    </source>
</evidence>
<feature type="chain" id="PRO_1000084287" description="Methylenetetrahydrofolate--tRNA-(uracil-5-)-methyltransferase TrmFO">
    <location>
        <begin position="1"/>
        <end position="451"/>
    </location>
</feature>
<feature type="binding site" evidence="1">
    <location>
        <begin position="9"/>
        <end position="14"/>
    </location>
    <ligand>
        <name>FAD</name>
        <dbReference type="ChEBI" id="CHEBI:57692"/>
    </ligand>
</feature>
<keyword id="KW-0963">Cytoplasm</keyword>
<keyword id="KW-0274">FAD</keyword>
<keyword id="KW-0285">Flavoprotein</keyword>
<keyword id="KW-0489">Methyltransferase</keyword>
<keyword id="KW-0520">NAD</keyword>
<keyword id="KW-0521">NADP</keyword>
<keyword id="KW-1185">Reference proteome</keyword>
<keyword id="KW-0808">Transferase</keyword>
<keyword id="KW-0819">tRNA processing</keyword>
<comment type="function">
    <text evidence="1">Catalyzes the folate-dependent formation of 5-methyl-uridine at position 54 (M-5-U54) in all tRNAs.</text>
</comment>
<comment type="catalytic activity">
    <reaction evidence="1">
        <text>uridine(54) in tRNA + (6R)-5,10-methylene-5,6,7,8-tetrahydrofolate + NADH + H(+) = 5-methyluridine(54) in tRNA + (6S)-5,6,7,8-tetrahydrofolate + NAD(+)</text>
        <dbReference type="Rhea" id="RHEA:16873"/>
        <dbReference type="Rhea" id="RHEA-COMP:10167"/>
        <dbReference type="Rhea" id="RHEA-COMP:10193"/>
        <dbReference type="ChEBI" id="CHEBI:15378"/>
        <dbReference type="ChEBI" id="CHEBI:15636"/>
        <dbReference type="ChEBI" id="CHEBI:57453"/>
        <dbReference type="ChEBI" id="CHEBI:57540"/>
        <dbReference type="ChEBI" id="CHEBI:57945"/>
        <dbReference type="ChEBI" id="CHEBI:65315"/>
        <dbReference type="ChEBI" id="CHEBI:74447"/>
        <dbReference type="EC" id="2.1.1.74"/>
    </reaction>
</comment>
<comment type="catalytic activity">
    <reaction evidence="1">
        <text>uridine(54) in tRNA + (6R)-5,10-methylene-5,6,7,8-tetrahydrofolate + NADPH + H(+) = 5-methyluridine(54) in tRNA + (6S)-5,6,7,8-tetrahydrofolate + NADP(+)</text>
        <dbReference type="Rhea" id="RHEA:62372"/>
        <dbReference type="Rhea" id="RHEA-COMP:10167"/>
        <dbReference type="Rhea" id="RHEA-COMP:10193"/>
        <dbReference type="ChEBI" id="CHEBI:15378"/>
        <dbReference type="ChEBI" id="CHEBI:15636"/>
        <dbReference type="ChEBI" id="CHEBI:57453"/>
        <dbReference type="ChEBI" id="CHEBI:57783"/>
        <dbReference type="ChEBI" id="CHEBI:58349"/>
        <dbReference type="ChEBI" id="CHEBI:65315"/>
        <dbReference type="ChEBI" id="CHEBI:74447"/>
        <dbReference type="EC" id="2.1.1.74"/>
    </reaction>
</comment>
<comment type="cofactor">
    <cofactor evidence="1">
        <name>FAD</name>
        <dbReference type="ChEBI" id="CHEBI:57692"/>
    </cofactor>
</comment>
<comment type="subcellular location">
    <subcellularLocation>
        <location evidence="1">Cytoplasm</location>
    </subcellularLocation>
</comment>
<comment type="similarity">
    <text evidence="1">Belongs to the MnmG family. TrmFO subfamily.</text>
</comment>
<name>TRMFO_DINSH</name>
<protein>
    <recommendedName>
        <fullName evidence="1">Methylenetetrahydrofolate--tRNA-(uracil-5-)-methyltransferase TrmFO</fullName>
        <ecNumber evidence="1">2.1.1.74</ecNumber>
    </recommendedName>
    <alternativeName>
        <fullName evidence="1">Folate-dependent tRNA (uracil-5-)-methyltransferase</fullName>
    </alternativeName>
    <alternativeName>
        <fullName evidence="1">Folate-dependent tRNA(M-5-U54)-methyltransferase</fullName>
    </alternativeName>
</protein>
<accession>A8LK18</accession>
<proteinExistence type="inferred from homology"/>
<reference key="1">
    <citation type="journal article" date="2010" name="ISME J.">
        <title>The complete genome sequence of the algal symbiont Dinoroseobacter shibae: a hitchhiker's guide to life in the sea.</title>
        <authorList>
            <person name="Wagner-Dobler I."/>
            <person name="Ballhausen B."/>
            <person name="Berger M."/>
            <person name="Brinkhoff T."/>
            <person name="Buchholz I."/>
            <person name="Bunk B."/>
            <person name="Cypionka H."/>
            <person name="Daniel R."/>
            <person name="Drepper T."/>
            <person name="Gerdts G."/>
            <person name="Hahnke S."/>
            <person name="Han C."/>
            <person name="Jahn D."/>
            <person name="Kalhoefer D."/>
            <person name="Kiss H."/>
            <person name="Klenk H.P."/>
            <person name="Kyrpides N."/>
            <person name="Liebl W."/>
            <person name="Liesegang H."/>
            <person name="Meincke L."/>
            <person name="Pati A."/>
            <person name="Petersen J."/>
            <person name="Piekarski T."/>
            <person name="Pommerenke C."/>
            <person name="Pradella S."/>
            <person name="Pukall R."/>
            <person name="Rabus R."/>
            <person name="Stackebrandt E."/>
            <person name="Thole S."/>
            <person name="Thompson L."/>
            <person name="Tielen P."/>
            <person name="Tomasch J."/>
            <person name="von Jan M."/>
            <person name="Wanphrut N."/>
            <person name="Wichels A."/>
            <person name="Zech H."/>
            <person name="Simon M."/>
        </authorList>
    </citation>
    <scope>NUCLEOTIDE SEQUENCE [LARGE SCALE GENOMIC DNA]</scope>
    <source>
        <strain>DSM 16493 / NCIMB 14021 / DFL 12</strain>
    </source>
</reference>
<gene>
    <name evidence="1" type="primary">trmFO</name>
    <name type="synonym">gid</name>
    <name type="ordered locus">Dshi_1475</name>
</gene>
<organism>
    <name type="scientific">Dinoroseobacter shibae (strain DSM 16493 / NCIMB 14021 / DFL 12)</name>
    <dbReference type="NCBI Taxonomy" id="398580"/>
    <lineage>
        <taxon>Bacteria</taxon>
        <taxon>Pseudomonadati</taxon>
        <taxon>Pseudomonadota</taxon>
        <taxon>Alphaproteobacteria</taxon>
        <taxon>Rhodobacterales</taxon>
        <taxon>Roseobacteraceae</taxon>
        <taxon>Dinoroseobacter</taxon>
    </lineage>
</organism>
<dbReference type="EC" id="2.1.1.74" evidence="1"/>
<dbReference type="EMBL" id="CP000830">
    <property type="protein sequence ID" value="ABV93217.1"/>
    <property type="molecule type" value="Genomic_DNA"/>
</dbReference>
<dbReference type="RefSeq" id="WP_012178147.1">
    <property type="nucleotide sequence ID" value="NC_009952.1"/>
</dbReference>
<dbReference type="SMR" id="A8LK18"/>
<dbReference type="STRING" id="398580.Dshi_1475"/>
<dbReference type="KEGG" id="dsh:Dshi_1475"/>
<dbReference type="eggNOG" id="COG1206">
    <property type="taxonomic scope" value="Bacteria"/>
</dbReference>
<dbReference type="HOGENOM" id="CLU_033057_1_0_5"/>
<dbReference type="OrthoDB" id="9803114at2"/>
<dbReference type="Proteomes" id="UP000006833">
    <property type="component" value="Chromosome"/>
</dbReference>
<dbReference type="GO" id="GO:0005829">
    <property type="term" value="C:cytosol"/>
    <property type="evidence" value="ECO:0007669"/>
    <property type="project" value="TreeGrafter"/>
</dbReference>
<dbReference type="GO" id="GO:0050660">
    <property type="term" value="F:flavin adenine dinucleotide binding"/>
    <property type="evidence" value="ECO:0007669"/>
    <property type="project" value="UniProtKB-UniRule"/>
</dbReference>
<dbReference type="GO" id="GO:0047151">
    <property type="term" value="F:tRNA (uracil(54)-C5)-methyltransferase activity, 5,10-methylenetetrahydrofolate-dependent"/>
    <property type="evidence" value="ECO:0007669"/>
    <property type="project" value="UniProtKB-UniRule"/>
</dbReference>
<dbReference type="GO" id="GO:0030488">
    <property type="term" value="P:tRNA methylation"/>
    <property type="evidence" value="ECO:0007669"/>
    <property type="project" value="TreeGrafter"/>
</dbReference>
<dbReference type="GO" id="GO:0002098">
    <property type="term" value="P:tRNA wobble uridine modification"/>
    <property type="evidence" value="ECO:0007669"/>
    <property type="project" value="TreeGrafter"/>
</dbReference>
<dbReference type="Gene3D" id="3.50.50.60">
    <property type="entry name" value="FAD/NAD(P)-binding domain"/>
    <property type="match status" value="2"/>
</dbReference>
<dbReference type="HAMAP" id="MF_01037">
    <property type="entry name" value="TrmFO"/>
    <property type="match status" value="1"/>
</dbReference>
<dbReference type="InterPro" id="IPR036188">
    <property type="entry name" value="FAD/NAD-bd_sf"/>
</dbReference>
<dbReference type="InterPro" id="IPR002218">
    <property type="entry name" value="MnmG-rel"/>
</dbReference>
<dbReference type="InterPro" id="IPR020595">
    <property type="entry name" value="MnmG-rel_CS"/>
</dbReference>
<dbReference type="InterPro" id="IPR040131">
    <property type="entry name" value="MnmG_N"/>
</dbReference>
<dbReference type="InterPro" id="IPR004417">
    <property type="entry name" value="TrmFO"/>
</dbReference>
<dbReference type="NCBIfam" id="TIGR00137">
    <property type="entry name" value="gid_trmFO"/>
    <property type="match status" value="1"/>
</dbReference>
<dbReference type="NCBIfam" id="NF003739">
    <property type="entry name" value="PRK05335.1"/>
    <property type="match status" value="1"/>
</dbReference>
<dbReference type="PANTHER" id="PTHR11806">
    <property type="entry name" value="GLUCOSE INHIBITED DIVISION PROTEIN A"/>
    <property type="match status" value="1"/>
</dbReference>
<dbReference type="PANTHER" id="PTHR11806:SF2">
    <property type="entry name" value="METHYLENETETRAHYDROFOLATE--TRNA-(URACIL-5-)-METHYLTRANSFERASE TRMFO"/>
    <property type="match status" value="1"/>
</dbReference>
<dbReference type="Pfam" id="PF01134">
    <property type="entry name" value="GIDA"/>
    <property type="match status" value="1"/>
</dbReference>
<dbReference type="SUPFAM" id="SSF51905">
    <property type="entry name" value="FAD/NAD(P)-binding domain"/>
    <property type="match status" value="1"/>
</dbReference>
<dbReference type="PROSITE" id="PS01281">
    <property type="entry name" value="GIDA_2"/>
    <property type="match status" value="1"/>
</dbReference>